<organism>
    <name type="scientific">Pongo pygmaeus</name>
    <name type="common">Bornean orangutan</name>
    <dbReference type="NCBI Taxonomy" id="9600"/>
    <lineage>
        <taxon>Eukaryota</taxon>
        <taxon>Metazoa</taxon>
        <taxon>Chordata</taxon>
        <taxon>Craniata</taxon>
        <taxon>Vertebrata</taxon>
        <taxon>Euteleostomi</taxon>
        <taxon>Mammalia</taxon>
        <taxon>Eutheria</taxon>
        <taxon>Euarchontoglires</taxon>
        <taxon>Primates</taxon>
        <taxon>Haplorrhini</taxon>
        <taxon>Catarrhini</taxon>
        <taxon>Hominidae</taxon>
        <taxon>Pongo</taxon>
    </lineage>
</organism>
<gene>
    <name type="primary">RNASE9</name>
</gene>
<accession>Q7YRH4</accession>
<feature type="signal peptide" evidence="2">
    <location>
        <begin position="1"/>
        <end position="26"/>
    </location>
</feature>
<feature type="chain" id="PRO_0000030959" description="Inactive ribonuclease-like protein 9">
    <location>
        <begin position="27"/>
        <end position="204"/>
    </location>
</feature>
<feature type="glycosylation site" description="N-linked (GlcNAc...) asparagine" evidence="2">
    <location>
        <position position="130"/>
    </location>
</feature>
<feature type="glycosylation site" description="N-linked (GlcNAc...) asparagine" evidence="2">
    <location>
        <position position="142"/>
    </location>
</feature>
<feature type="disulfide bond" evidence="1">
    <location>
        <begin position="97"/>
        <end position="152"/>
    </location>
</feature>
<feature type="disulfide bond" evidence="1">
    <location>
        <begin position="115"/>
        <end position="167"/>
    </location>
</feature>
<feature type="disulfide bond" evidence="1">
    <location>
        <begin position="122"/>
        <end position="129"/>
    </location>
</feature>
<evidence type="ECO:0000250" key="1"/>
<evidence type="ECO:0000255" key="2"/>
<evidence type="ECO:0000305" key="3"/>
<keyword id="KW-1015">Disulfide bond</keyword>
<keyword id="KW-0325">Glycoprotein</keyword>
<keyword id="KW-0964">Secreted</keyword>
<keyword id="KW-0732">Signal</keyword>
<comment type="function">
    <text evidence="1">Does not exhibit any ribonuclease activity.</text>
</comment>
<comment type="subcellular location">
    <subcellularLocation>
        <location evidence="3">Secreted</location>
    </subcellularLocation>
</comment>
<comment type="similarity">
    <text evidence="3">Belongs to the pancreatic ribonuclease family.</text>
</comment>
<protein>
    <recommendedName>
        <fullName>Inactive ribonuclease-like protein 9</fullName>
    </recommendedName>
</protein>
<name>RNAS9_PONPY</name>
<reference key="1">
    <citation type="submission" date="2003-06" db="EMBL/GenBank/DDBJ databases">
        <title>LOC122650 on chromosome 14q11.2 is related to the RNase A superfamily and contains a unique amino-terminal pre-protein-like domain.</title>
        <authorList>
            <person name="Devor E.J."/>
            <person name="Moffat-Wilson K.A."/>
        </authorList>
    </citation>
    <scope>NUCLEOTIDE SEQUENCE [GENOMIC DNA]</scope>
</reference>
<sequence length="204" mass="24222">MMRTLITIHPLPLLLLLQQLLQPVQFQEVDTDYDLPEDKREEFEEYVEQFFSTGPTRPPTKEKVKRLLLIEPGMPLYHVDYCNSEIMRKNVYYKHRCVAEHYFLLMQYDELQKICYNRFVPCKNGVRKCNRSKGLVEGVYCNLTEAFRIPACKYESFYRKGYVLITCAWQNEMQKLIPHTINDLVEPPEHRSFLSEDGVFVISP</sequence>
<proteinExistence type="inferred from homology"/>
<dbReference type="EMBL" id="AY330192">
    <property type="protein sequence ID" value="AAQ01502.1"/>
    <property type="molecule type" value="Genomic_DNA"/>
</dbReference>
<dbReference type="SMR" id="Q7YRH4"/>
<dbReference type="GlyCosmos" id="Q7YRH4">
    <property type="glycosylation" value="2 sites, No reported glycans"/>
</dbReference>
<dbReference type="GO" id="GO:0005576">
    <property type="term" value="C:extracellular region"/>
    <property type="evidence" value="ECO:0007669"/>
    <property type="project" value="UniProtKB-SubCell"/>
</dbReference>
<dbReference type="GO" id="GO:0003676">
    <property type="term" value="F:nucleic acid binding"/>
    <property type="evidence" value="ECO:0007669"/>
    <property type="project" value="InterPro"/>
</dbReference>
<dbReference type="GO" id="GO:0050830">
    <property type="term" value="P:defense response to Gram-positive bacterium"/>
    <property type="evidence" value="ECO:0007669"/>
    <property type="project" value="TreeGrafter"/>
</dbReference>
<dbReference type="CDD" id="cd00163">
    <property type="entry name" value="RNase_A"/>
    <property type="match status" value="1"/>
</dbReference>
<dbReference type="FunFam" id="3.10.130.10:FF:000003">
    <property type="entry name" value="Inactive ribonuclease-like protein 9"/>
    <property type="match status" value="1"/>
</dbReference>
<dbReference type="Gene3D" id="3.10.130.10">
    <property type="entry name" value="Ribonuclease A-like domain"/>
    <property type="match status" value="1"/>
</dbReference>
<dbReference type="InterPro" id="IPR001427">
    <property type="entry name" value="RNaseA"/>
</dbReference>
<dbReference type="InterPro" id="IPR036816">
    <property type="entry name" value="RNaseA-like_dom_sf"/>
</dbReference>
<dbReference type="InterPro" id="IPR023412">
    <property type="entry name" value="RNaseA_domain"/>
</dbReference>
<dbReference type="PANTHER" id="PTHR11437:SF14">
    <property type="entry name" value="INACTIVE RIBONUCLEASE-LIKE PROTEIN 9"/>
    <property type="match status" value="1"/>
</dbReference>
<dbReference type="PANTHER" id="PTHR11437">
    <property type="entry name" value="RIBONUCLEASE"/>
    <property type="match status" value="1"/>
</dbReference>
<dbReference type="Pfam" id="PF00074">
    <property type="entry name" value="RnaseA"/>
    <property type="match status" value="1"/>
</dbReference>
<dbReference type="SMART" id="SM00092">
    <property type="entry name" value="RNAse_Pc"/>
    <property type="match status" value="1"/>
</dbReference>
<dbReference type="SUPFAM" id="SSF54076">
    <property type="entry name" value="RNase A-like"/>
    <property type="match status" value="1"/>
</dbReference>